<dbReference type="EMBL" id="LT708304">
    <property type="protein sequence ID" value="SIU00877.1"/>
    <property type="molecule type" value="Genomic_DNA"/>
</dbReference>
<dbReference type="RefSeq" id="NP_855915.1">
    <property type="nucleotide sequence ID" value="NC_002945.3"/>
</dbReference>
<dbReference type="RefSeq" id="WP_003411543.1">
    <property type="nucleotide sequence ID" value="NC_002945.4"/>
</dbReference>
<dbReference type="SMR" id="P63750"/>
<dbReference type="KEGG" id="mbo:BQ2027_MB2266"/>
<dbReference type="PATRIC" id="fig|233413.5.peg.2487"/>
<dbReference type="Proteomes" id="UP000001419">
    <property type="component" value="Chromosome"/>
</dbReference>
<dbReference type="Gene3D" id="1.10.10.2840">
    <property type="entry name" value="PucR C-terminal helix-turn-helix domain"/>
    <property type="match status" value="1"/>
</dbReference>
<dbReference type="InterPro" id="IPR051448">
    <property type="entry name" value="CdaR-like_regulators"/>
</dbReference>
<dbReference type="InterPro" id="IPR041522">
    <property type="entry name" value="CdaR_GGDEF"/>
</dbReference>
<dbReference type="InterPro" id="IPR025736">
    <property type="entry name" value="PucR_C-HTH_dom"/>
</dbReference>
<dbReference type="InterPro" id="IPR042070">
    <property type="entry name" value="PucR_C-HTH_sf"/>
</dbReference>
<dbReference type="PANTHER" id="PTHR33744">
    <property type="entry name" value="CARBOHYDRATE DIACID REGULATOR"/>
    <property type="match status" value="1"/>
</dbReference>
<dbReference type="PANTHER" id="PTHR33744:SF7">
    <property type="entry name" value="PUCR FAMILY TRANSCRIPTIONAL REGULATOR"/>
    <property type="match status" value="1"/>
</dbReference>
<dbReference type="Pfam" id="PF17853">
    <property type="entry name" value="GGDEF_2"/>
    <property type="match status" value="1"/>
</dbReference>
<dbReference type="Pfam" id="PF13556">
    <property type="entry name" value="HTH_30"/>
    <property type="match status" value="1"/>
</dbReference>
<proteinExistence type="inferred from homology"/>
<comment type="similarity">
    <text evidence="2">Belongs to the CdaR family.</text>
</comment>
<protein>
    <recommendedName>
        <fullName>Uncharacterized protein Mb2266</fullName>
    </recommendedName>
</protein>
<gene>
    <name type="ordered locus">BQ2027_MB2266</name>
</gene>
<sequence length="414" mass="44638">MNDNQLAPVARPRSPLELLDTVPDSLLRRLKQYSGRLATEAVSAMQERLPFFADLEASQRASVALVVQTAVVNFVEWMHDPHSDVGYTAQAFELVPQDLTRRIALRQTVDMVRVTMEFFEEVVPLLARSEEQLTALTVGILKYSRDLAFTAATAYADAAEARGTWDSRMEASVVDAVVRGDTGPELLSRAAALNWDTTAPATVLVGTPAPGPNGSNSDGDSERASQDVRDTAARHGRAALTDVHGTWLVAIVSGQLSPTEKFLKDLLAAFADAPVVIGPTAPMLTAAHRSASEAISGMNAVAGWRGAPRPVLARELLPERALMGDASAIVALHTDVMRPLADAGPTLIETLDAYLDCGGAIEACARKLFVHPNTVRYRLKRITDFTGRDPTQPRDAYVLRVAATVGQLNYPTPH</sequence>
<name>Y2266_MYCBO</name>
<keyword id="KW-1185">Reference proteome</keyword>
<evidence type="ECO:0000256" key="1">
    <source>
        <dbReference type="SAM" id="MobiDB-lite"/>
    </source>
</evidence>
<evidence type="ECO:0000305" key="2"/>
<organism>
    <name type="scientific">Mycobacterium bovis (strain ATCC BAA-935 / AF2122/97)</name>
    <dbReference type="NCBI Taxonomy" id="233413"/>
    <lineage>
        <taxon>Bacteria</taxon>
        <taxon>Bacillati</taxon>
        <taxon>Actinomycetota</taxon>
        <taxon>Actinomycetes</taxon>
        <taxon>Mycobacteriales</taxon>
        <taxon>Mycobacteriaceae</taxon>
        <taxon>Mycobacterium</taxon>
        <taxon>Mycobacterium tuberculosis complex</taxon>
    </lineage>
</organism>
<reference key="1">
    <citation type="journal article" date="2003" name="Proc. Natl. Acad. Sci. U.S.A.">
        <title>The complete genome sequence of Mycobacterium bovis.</title>
        <authorList>
            <person name="Garnier T."/>
            <person name="Eiglmeier K."/>
            <person name="Camus J.-C."/>
            <person name="Medina N."/>
            <person name="Mansoor H."/>
            <person name="Pryor M."/>
            <person name="Duthoy S."/>
            <person name="Grondin S."/>
            <person name="Lacroix C."/>
            <person name="Monsempe C."/>
            <person name="Simon S."/>
            <person name="Harris B."/>
            <person name="Atkin R."/>
            <person name="Doggett J."/>
            <person name="Mayes R."/>
            <person name="Keating L."/>
            <person name="Wheeler P.R."/>
            <person name="Parkhill J."/>
            <person name="Barrell B.G."/>
            <person name="Cole S.T."/>
            <person name="Gordon S.V."/>
            <person name="Hewinson R.G."/>
        </authorList>
    </citation>
    <scope>NUCLEOTIDE SEQUENCE [LARGE SCALE GENOMIC DNA]</scope>
    <source>
        <strain>ATCC BAA-935 / AF2122/97</strain>
    </source>
</reference>
<reference key="2">
    <citation type="journal article" date="2017" name="Genome Announc.">
        <title>Updated reference genome sequence and annotation of Mycobacterium bovis AF2122/97.</title>
        <authorList>
            <person name="Malone K.M."/>
            <person name="Farrell D."/>
            <person name="Stuber T.P."/>
            <person name="Schubert O.T."/>
            <person name="Aebersold R."/>
            <person name="Robbe-Austerman S."/>
            <person name="Gordon S.V."/>
        </authorList>
    </citation>
    <scope>NUCLEOTIDE SEQUENCE [LARGE SCALE GENOMIC DNA]</scope>
    <scope>GENOME REANNOTATION</scope>
    <source>
        <strain>ATCC BAA-935 / AF2122/97</strain>
    </source>
</reference>
<accession>P63750</accession>
<accession>A0A1R3Y105</accession>
<accession>Q10523</accession>
<accession>X2BKJ7</accession>
<feature type="chain" id="PRO_0000165950" description="Uncharacterized protein Mb2266">
    <location>
        <begin position="1"/>
        <end position="414"/>
    </location>
</feature>
<feature type="region of interest" description="Disordered" evidence="1">
    <location>
        <begin position="204"/>
        <end position="230"/>
    </location>
</feature>
<feature type="compositionally biased region" description="Basic and acidic residues" evidence="1">
    <location>
        <begin position="220"/>
        <end position="230"/>
    </location>
</feature>